<accession>Q6P4W0</accession>
<protein>
    <recommendedName>
        <fullName evidence="1">BRISC complex subunit Abraxas 2</fullName>
    </recommendedName>
    <alternativeName>
        <fullName>Abraxas brother protein 1</fullName>
    </alternativeName>
    <alternativeName>
        <fullName>BRISC complex subunit Abro1</fullName>
    </alternativeName>
    <alternativeName>
        <fullName>Protein FAM175B</fullName>
    </alternativeName>
</protein>
<evidence type="ECO:0000250" key="1">
    <source>
        <dbReference type="UniProtKB" id="Q15018"/>
    </source>
</evidence>
<evidence type="ECO:0000250" key="2">
    <source>
        <dbReference type="UniProtKB" id="Q3TCJ1"/>
    </source>
</evidence>
<evidence type="ECO:0000255" key="3"/>
<evidence type="ECO:0000255" key="4">
    <source>
        <dbReference type="PROSITE-ProRule" id="PRU01182"/>
    </source>
</evidence>
<evidence type="ECO:0000256" key="5">
    <source>
        <dbReference type="SAM" id="MobiDB-lite"/>
    </source>
</evidence>
<evidence type="ECO:0000305" key="6"/>
<proteinExistence type="evidence at transcript level"/>
<dbReference type="EMBL" id="BC063225">
    <property type="protein sequence ID" value="AAH63225.1"/>
    <property type="molecule type" value="mRNA"/>
</dbReference>
<dbReference type="RefSeq" id="NP_001192104.1">
    <property type="nucleotide sequence ID" value="NM_001205175.1"/>
</dbReference>
<dbReference type="SMR" id="Q6P4W0"/>
<dbReference type="FunCoup" id="Q6P4W0">
    <property type="interactions" value="2727"/>
</dbReference>
<dbReference type="STRING" id="8364.ENSXETP00000040458"/>
<dbReference type="PaxDb" id="8364-ENSXETP00000050983"/>
<dbReference type="GeneID" id="394764"/>
<dbReference type="KEGG" id="xtr:394764"/>
<dbReference type="AGR" id="Xenbase:XB-GENE-5771927"/>
<dbReference type="CTD" id="23172"/>
<dbReference type="Xenbase" id="XB-GENE-5771927">
    <property type="gene designation" value="abraxas2"/>
</dbReference>
<dbReference type="eggNOG" id="ENOG502QTRN">
    <property type="taxonomic scope" value="Eukaryota"/>
</dbReference>
<dbReference type="HOGENOM" id="CLU_040659_0_0_1"/>
<dbReference type="InParanoid" id="Q6P4W0"/>
<dbReference type="OMA" id="CPPRGMM"/>
<dbReference type="OrthoDB" id="6358435at2759"/>
<dbReference type="PhylomeDB" id="Q6P4W0"/>
<dbReference type="TreeFam" id="TF331751"/>
<dbReference type="Reactome" id="R-XTR-5689901">
    <property type="pathway name" value="Metalloprotease DUBs"/>
</dbReference>
<dbReference type="Proteomes" id="UP000008143">
    <property type="component" value="Chromosome 7"/>
</dbReference>
<dbReference type="Bgee" id="ENSXETG00000023627">
    <property type="expression patterns" value="Expressed in egg cell and 16 other cell types or tissues"/>
</dbReference>
<dbReference type="GO" id="GO:0070552">
    <property type="term" value="C:BRISC complex"/>
    <property type="evidence" value="ECO:0000250"/>
    <property type="project" value="UniProtKB"/>
</dbReference>
<dbReference type="GO" id="GO:0005737">
    <property type="term" value="C:cytoplasm"/>
    <property type="evidence" value="ECO:0000250"/>
    <property type="project" value="UniProtKB"/>
</dbReference>
<dbReference type="GO" id="GO:0005874">
    <property type="term" value="C:microtubule"/>
    <property type="evidence" value="ECO:0007669"/>
    <property type="project" value="UniProtKB-KW"/>
</dbReference>
<dbReference type="GO" id="GO:0000922">
    <property type="term" value="C:spindle pole"/>
    <property type="evidence" value="ECO:0007669"/>
    <property type="project" value="UniProtKB-SubCell"/>
</dbReference>
<dbReference type="GO" id="GO:0008017">
    <property type="term" value="F:microtubule binding"/>
    <property type="evidence" value="ECO:0000250"/>
    <property type="project" value="UniProtKB"/>
</dbReference>
<dbReference type="GO" id="GO:0031593">
    <property type="term" value="F:polyubiquitin modification-dependent protein binding"/>
    <property type="evidence" value="ECO:0000250"/>
    <property type="project" value="UniProtKB"/>
</dbReference>
<dbReference type="GO" id="GO:0008608">
    <property type="term" value="P:attachment of spindle microtubules to kinetochore"/>
    <property type="evidence" value="ECO:0000250"/>
    <property type="project" value="UniProtKB"/>
</dbReference>
<dbReference type="GO" id="GO:0051301">
    <property type="term" value="P:cell division"/>
    <property type="evidence" value="ECO:0007669"/>
    <property type="project" value="UniProtKB-KW"/>
</dbReference>
<dbReference type="GO" id="GO:0007059">
    <property type="term" value="P:chromosome segregation"/>
    <property type="evidence" value="ECO:0000250"/>
    <property type="project" value="UniProtKB"/>
</dbReference>
<dbReference type="GO" id="GO:0000278">
    <property type="term" value="P:mitotic cell cycle"/>
    <property type="evidence" value="ECO:0000250"/>
    <property type="project" value="UniProtKB"/>
</dbReference>
<dbReference type="GO" id="GO:0090307">
    <property type="term" value="P:mitotic spindle assembly"/>
    <property type="evidence" value="ECO:0000250"/>
    <property type="project" value="UniProtKB"/>
</dbReference>
<dbReference type="GO" id="GO:0070536">
    <property type="term" value="P:protein K63-linked deubiquitination"/>
    <property type="evidence" value="ECO:0000250"/>
    <property type="project" value="UniProtKB"/>
</dbReference>
<dbReference type="GO" id="GO:0002931">
    <property type="term" value="P:response to ischemia"/>
    <property type="evidence" value="ECO:0000250"/>
    <property type="project" value="UniProtKB"/>
</dbReference>
<dbReference type="CDD" id="cd23524">
    <property type="entry name" value="Abraxas_2"/>
    <property type="match status" value="1"/>
</dbReference>
<dbReference type="InterPro" id="IPR023240">
    <property type="entry name" value="BRISC_Abraxas2"/>
</dbReference>
<dbReference type="InterPro" id="IPR023238">
    <property type="entry name" value="FAM175"/>
</dbReference>
<dbReference type="InterPro" id="IPR037518">
    <property type="entry name" value="MPN"/>
</dbReference>
<dbReference type="PANTHER" id="PTHR31728">
    <property type="entry name" value="ABRAXAS FAMILY MEMBER"/>
    <property type="match status" value="1"/>
</dbReference>
<dbReference type="PANTHER" id="PTHR31728:SF1">
    <property type="entry name" value="BRISC COMPLEX SUBUNIT ABRAXAS 2"/>
    <property type="match status" value="1"/>
</dbReference>
<dbReference type="Pfam" id="PF21125">
    <property type="entry name" value="MPN_2A_DUB_like"/>
    <property type="match status" value="1"/>
</dbReference>
<dbReference type="PRINTS" id="PR02053">
    <property type="entry name" value="BRISCABRO1"/>
</dbReference>
<dbReference type="PRINTS" id="PR02051">
    <property type="entry name" value="PROTEINF175"/>
</dbReference>
<dbReference type="PROSITE" id="PS50249">
    <property type="entry name" value="MPN"/>
    <property type="match status" value="1"/>
</dbReference>
<sequence>MAASISGYTFSSLCFHSANSCSDHEGFLLGEVRQEETFSISDSQISNTELLQVIEIHRHEPCTNLFSFYDYAGTVNEESLDRILKDRRKNVIGWYRFRRNTQQQMSYREQILHKQLTRLLGAPDLVFLLITFISTANTSTHALEYVLFRPNRRYNQRVSLTIPNLGTTSQQEYKVSSVPNTSQNYAKVIKEHGINFFDKDGVMKDIRLIYQVYNALQEKVQAVSEEVEKSERVVESCQAEVDKLRTQICRRKAEKEREENLRHSLQLQTEDTTDCVMTLSSTDFIAAASRPQDLHPPAYTEENADAKDGVDSPPDMPRPQAVGSSCQLLIEIKDGEPSACKTSASEETETEESQSDYKKSRHLSESPDSDMADDQPCQLSTQPDGDLAQQ</sequence>
<name>ABRX2_XENTR</name>
<gene>
    <name evidence="1" type="primary">abraxas2</name>
    <name type="synonym">abro1</name>
    <name type="synonym">fam175b</name>
</gene>
<comment type="function">
    <text evidence="1 2">Component of the BRISC complex, a multiprotein complex that specifically cleaves 'Lys-63'-linked polyubiquitin, leaving the last ubiquitin chain attached to its substrates. May act as a central scaffold protein that assembles the various components of the BRISC complex and retains them in the cytoplasm (By similarity). Plays a role in regulating the onset of apoptosis via its role in modulating 'Lys-63'-linked ubiquitination of target proteins (By similarity). Required for normal mitotic spindle assembly and microtubule attachment to kinetochores via its role in deubiquitinating numa1 (By similarity).</text>
</comment>
<comment type="subunit">
    <text evidence="1">Component of the BRISC complex, at least composed of ABRAXAS2 and the catalytic subunit brcc3/brcc36. Interacts with brcc3/brcc36; the interaction is direct. The BRISC complex binds monoubiquitin and polyubiquitin.</text>
</comment>
<comment type="subcellular location">
    <subcellularLocation>
        <location evidence="1">Cytoplasm</location>
    </subcellularLocation>
    <subcellularLocation>
        <location evidence="1">Nucleus</location>
    </subcellularLocation>
    <subcellularLocation>
        <location evidence="1">Cytoplasm</location>
        <location evidence="1">Cytoskeleton</location>
        <location evidence="1">Spindle pole</location>
    </subcellularLocation>
    <subcellularLocation>
        <location evidence="1">Cytoplasm</location>
        <location evidence="1">Cytoskeleton</location>
    </subcellularLocation>
    <text evidence="1">A minor proportion is detected in the nucleus. Translocates into the nucleus in response to DNA damage. Directly binds to microtubules and is detected at the minus end of K-fibers.</text>
</comment>
<comment type="similarity">
    <text evidence="6">Belongs to the FAM175 family. Abro1 subfamily.</text>
</comment>
<comment type="caution">
    <text evidence="6">Although strongly related to the abraxas1 protein, lacks the C-terminal pSXXF that constitutes a specific recognition motif for the BRCT domain of brca1.</text>
</comment>
<organism>
    <name type="scientific">Xenopus tropicalis</name>
    <name type="common">Western clawed frog</name>
    <name type="synonym">Silurana tropicalis</name>
    <dbReference type="NCBI Taxonomy" id="8364"/>
    <lineage>
        <taxon>Eukaryota</taxon>
        <taxon>Metazoa</taxon>
        <taxon>Chordata</taxon>
        <taxon>Craniata</taxon>
        <taxon>Vertebrata</taxon>
        <taxon>Euteleostomi</taxon>
        <taxon>Amphibia</taxon>
        <taxon>Batrachia</taxon>
        <taxon>Anura</taxon>
        <taxon>Pipoidea</taxon>
        <taxon>Pipidae</taxon>
        <taxon>Xenopodinae</taxon>
        <taxon>Xenopus</taxon>
        <taxon>Silurana</taxon>
    </lineage>
</organism>
<feature type="chain" id="PRO_0000373943" description="BRISC complex subunit Abraxas 2">
    <location>
        <begin position="1"/>
        <end position="390"/>
    </location>
</feature>
<feature type="domain" description="MPN" evidence="4">
    <location>
        <begin position="3"/>
        <end position="149"/>
    </location>
</feature>
<feature type="region of interest" description="Disordered" evidence="5">
    <location>
        <begin position="288"/>
        <end position="390"/>
    </location>
</feature>
<feature type="coiled-coil region" evidence="3">
    <location>
        <begin position="209"/>
        <end position="248"/>
    </location>
</feature>
<feature type="compositionally biased region" description="Basic and acidic residues" evidence="5">
    <location>
        <begin position="355"/>
        <end position="365"/>
    </location>
</feature>
<feature type="compositionally biased region" description="Polar residues" evidence="5">
    <location>
        <begin position="377"/>
        <end position="390"/>
    </location>
</feature>
<reference key="1">
    <citation type="submission" date="2003-12" db="EMBL/GenBank/DDBJ databases">
        <authorList>
            <consortium name="NIH - Xenopus Gene Collection (XGC) project"/>
        </authorList>
    </citation>
    <scope>NUCLEOTIDE SEQUENCE [LARGE SCALE MRNA]</scope>
    <source>
        <tissue>Embryo</tissue>
    </source>
</reference>
<keyword id="KW-0131">Cell cycle</keyword>
<keyword id="KW-0132">Cell division</keyword>
<keyword id="KW-0175">Coiled coil</keyword>
<keyword id="KW-0963">Cytoplasm</keyword>
<keyword id="KW-0206">Cytoskeleton</keyword>
<keyword id="KW-0493">Microtubule</keyword>
<keyword id="KW-0498">Mitosis</keyword>
<keyword id="KW-0539">Nucleus</keyword>
<keyword id="KW-1185">Reference proteome</keyword>
<keyword id="KW-0833">Ubl conjugation pathway</keyword>